<dbReference type="EMBL" id="CP000103">
    <property type="protein sequence ID" value="ABB74506.1"/>
    <property type="molecule type" value="Genomic_DNA"/>
</dbReference>
<dbReference type="RefSeq" id="WP_011380547.1">
    <property type="nucleotide sequence ID" value="NC_007614.1"/>
</dbReference>
<dbReference type="SMR" id="Q2Y9R5"/>
<dbReference type="STRING" id="323848.Nmul_A1203"/>
<dbReference type="KEGG" id="nmu:Nmul_A1203"/>
<dbReference type="eggNOG" id="COG0691">
    <property type="taxonomic scope" value="Bacteria"/>
</dbReference>
<dbReference type="HOGENOM" id="CLU_108953_3_0_4"/>
<dbReference type="OrthoDB" id="9805462at2"/>
<dbReference type="Proteomes" id="UP000002718">
    <property type="component" value="Chromosome"/>
</dbReference>
<dbReference type="GO" id="GO:0005829">
    <property type="term" value="C:cytosol"/>
    <property type="evidence" value="ECO:0007669"/>
    <property type="project" value="TreeGrafter"/>
</dbReference>
<dbReference type="GO" id="GO:0003723">
    <property type="term" value="F:RNA binding"/>
    <property type="evidence" value="ECO:0007669"/>
    <property type="project" value="UniProtKB-UniRule"/>
</dbReference>
<dbReference type="GO" id="GO:0070929">
    <property type="term" value="P:trans-translation"/>
    <property type="evidence" value="ECO:0007669"/>
    <property type="project" value="UniProtKB-UniRule"/>
</dbReference>
<dbReference type="CDD" id="cd09294">
    <property type="entry name" value="SmpB"/>
    <property type="match status" value="1"/>
</dbReference>
<dbReference type="Gene3D" id="2.40.280.10">
    <property type="match status" value="1"/>
</dbReference>
<dbReference type="HAMAP" id="MF_00023">
    <property type="entry name" value="SmpB"/>
    <property type="match status" value="1"/>
</dbReference>
<dbReference type="InterPro" id="IPR023620">
    <property type="entry name" value="SmpB"/>
</dbReference>
<dbReference type="InterPro" id="IPR000037">
    <property type="entry name" value="SsrA-bd_prot"/>
</dbReference>
<dbReference type="NCBIfam" id="NF003843">
    <property type="entry name" value="PRK05422.1"/>
    <property type="match status" value="1"/>
</dbReference>
<dbReference type="NCBIfam" id="TIGR00086">
    <property type="entry name" value="smpB"/>
    <property type="match status" value="1"/>
</dbReference>
<dbReference type="PANTHER" id="PTHR30308:SF2">
    <property type="entry name" value="SSRA-BINDING PROTEIN"/>
    <property type="match status" value="1"/>
</dbReference>
<dbReference type="PANTHER" id="PTHR30308">
    <property type="entry name" value="TMRNA-BINDING COMPONENT OF TRANS-TRANSLATION TAGGING COMPLEX"/>
    <property type="match status" value="1"/>
</dbReference>
<dbReference type="Pfam" id="PF01668">
    <property type="entry name" value="SmpB"/>
    <property type="match status" value="1"/>
</dbReference>
<dbReference type="SUPFAM" id="SSF74982">
    <property type="entry name" value="Small protein B (SmpB)"/>
    <property type="match status" value="1"/>
</dbReference>
<keyword id="KW-0963">Cytoplasm</keyword>
<keyword id="KW-1185">Reference proteome</keyword>
<keyword id="KW-0694">RNA-binding</keyword>
<gene>
    <name evidence="1" type="primary">smpB</name>
    <name type="ordered locus">Nmul_A1203</name>
</gene>
<protein>
    <recommendedName>
        <fullName evidence="1">SsrA-binding protein</fullName>
    </recommendedName>
    <alternativeName>
        <fullName evidence="1">Small protein B</fullName>
    </alternativeName>
</protein>
<proteinExistence type="inferred from homology"/>
<name>SSRP_NITMU</name>
<organism>
    <name type="scientific">Nitrosospira multiformis (strain ATCC 25196 / NCIMB 11849 / C 71)</name>
    <dbReference type="NCBI Taxonomy" id="323848"/>
    <lineage>
        <taxon>Bacteria</taxon>
        <taxon>Pseudomonadati</taxon>
        <taxon>Pseudomonadota</taxon>
        <taxon>Betaproteobacteria</taxon>
        <taxon>Nitrosomonadales</taxon>
        <taxon>Nitrosomonadaceae</taxon>
        <taxon>Nitrosospira</taxon>
    </lineage>
</organism>
<accession>Q2Y9R5</accession>
<reference key="1">
    <citation type="submission" date="2005-08" db="EMBL/GenBank/DDBJ databases">
        <title>Complete sequence of chromosome 1 of Nitrosospira multiformis ATCC 25196.</title>
        <authorList>
            <person name="Copeland A."/>
            <person name="Lucas S."/>
            <person name="Lapidus A."/>
            <person name="Barry K."/>
            <person name="Detter J.C."/>
            <person name="Glavina T."/>
            <person name="Hammon N."/>
            <person name="Israni S."/>
            <person name="Pitluck S."/>
            <person name="Chain P."/>
            <person name="Malfatti S."/>
            <person name="Shin M."/>
            <person name="Vergez L."/>
            <person name="Schmutz J."/>
            <person name="Larimer F."/>
            <person name="Land M."/>
            <person name="Hauser L."/>
            <person name="Kyrpides N."/>
            <person name="Lykidis A."/>
            <person name="Richardson P."/>
        </authorList>
    </citation>
    <scope>NUCLEOTIDE SEQUENCE [LARGE SCALE GENOMIC DNA]</scope>
    <source>
        <strain>ATCC 25196 / NCIMB 11849 / C 71</strain>
    </source>
</reference>
<evidence type="ECO:0000255" key="1">
    <source>
        <dbReference type="HAMAP-Rule" id="MF_00023"/>
    </source>
</evidence>
<evidence type="ECO:0000256" key="2">
    <source>
        <dbReference type="SAM" id="MobiDB-lite"/>
    </source>
</evidence>
<feature type="chain" id="PRO_1000002092" description="SsrA-binding protein">
    <location>
        <begin position="1"/>
        <end position="147"/>
    </location>
</feature>
<feature type="region of interest" description="Disordered" evidence="2">
    <location>
        <begin position="119"/>
        <end position="147"/>
    </location>
</feature>
<feature type="compositionally biased region" description="Basic and acidic residues" evidence="2">
    <location>
        <begin position="126"/>
        <end position="147"/>
    </location>
</feature>
<comment type="function">
    <text evidence="1">Required for rescue of stalled ribosomes mediated by trans-translation. Binds to transfer-messenger RNA (tmRNA), required for stable association of tmRNA with ribosomes. tmRNA and SmpB together mimic tRNA shape, replacing the anticodon stem-loop with SmpB. tmRNA is encoded by the ssrA gene; the 2 termini fold to resemble tRNA(Ala) and it encodes a 'tag peptide', a short internal open reading frame. During trans-translation Ala-aminoacylated tmRNA acts like a tRNA, entering the A-site of stalled ribosomes, displacing the stalled mRNA. The ribosome then switches to translate the ORF on the tmRNA; the nascent peptide is terminated with the 'tag peptide' encoded by the tmRNA and targeted for degradation. The ribosome is freed to recommence translation, which seems to be the essential function of trans-translation.</text>
</comment>
<comment type="subcellular location">
    <subcellularLocation>
        <location evidence="1">Cytoplasm</location>
    </subcellularLocation>
    <text evidence="1">The tmRNA-SmpB complex associates with stalled 70S ribosomes.</text>
</comment>
<comment type="similarity">
    <text evidence="1">Belongs to the SmpB family.</text>
</comment>
<sequence>MSIVQNKKAFHDYFIEEKHEAGAVLEGWEVKAIRAGRAQLKEAYVIIRNGELFLIGCHVSPLLAASTHIQPDPVRTRKLLLHAEEIKRLIGKVERAGYTLVPLDIHYKKGRIKLEIGLAKGKKQHDKRESEKQKEWERDKQRLMRPK</sequence>